<dbReference type="EMBL" id="DS028150">
    <property type="protein sequence ID" value="EEY62358.1"/>
    <property type="molecule type" value="Genomic_DNA"/>
</dbReference>
<dbReference type="RefSeq" id="XP_002898994.1">
    <property type="nucleotide sequence ID" value="XM_002898948.1"/>
</dbReference>
<dbReference type="SMR" id="D0NP16"/>
<dbReference type="STRING" id="403677.D0NP16"/>
<dbReference type="EnsemblProtists" id="PITG_14783T0">
    <property type="protein sequence ID" value="PITG_14783T0"/>
    <property type="gene ID" value="PITG_14783"/>
</dbReference>
<dbReference type="GeneID" id="9474171"/>
<dbReference type="KEGG" id="pif:PITG_14783"/>
<dbReference type="VEuPathDB" id="FungiDB:PITG_14783"/>
<dbReference type="eggNOG" id="ENOG502RFES">
    <property type="taxonomic scope" value="Eukaryota"/>
</dbReference>
<dbReference type="HOGENOM" id="CLU_149657_1_0_1"/>
<dbReference type="InParanoid" id="D0NP16"/>
<dbReference type="Proteomes" id="UP000006643">
    <property type="component" value="Partially assembled WGS sequence"/>
</dbReference>
<dbReference type="GO" id="GO:0005576">
    <property type="term" value="C:extracellular region"/>
    <property type="evidence" value="ECO:0007669"/>
    <property type="project" value="UniProtKB-SubCell"/>
</dbReference>
<dbReference type="GO" id="GO:0030430">
    <property type="term" value="C:host cell cytoplasm"/>
    <property type="evidence" value="ECO:0007669"/>
    <property type="project" value="UniProtKB-SubCell"/>
</dbReference>
<dbReference type="GO" id="GO:0042025">
    <property type="term" value="C:host cell nucleus"/>
    <property type="evidence" value="ECO:0007669"/>
    <property type="project" value="UniProtKB-SubCell"/>
</dbReference>
<dbReference type="Gene3D" id="1.10.10.2470">
    <property type="match status" value="1"/>
</dbReference>
<dbReference type="InterPro" id="IPR040691">
    <property type="entry name" value="PexRD2_WYL"/>
</dbReference>
<dbReference type="Pfam" id="PF18488">
    <property type="entry name" value="WYL_3"/>
    <property type="match status" value="1"/>
</dbReference>
<organism>
    <name type="scientific">Phytophthora infestans (strain T30-4)</name>
    <name type="common">Potato late blight agent</name>
    <dbReference type="NCBI Taxonomy" id="403677"/>
    <lineage>
        <taxon>Eukaryota</taxon>
        <taxon>Sar</taxon>
        <taxon>Stramenopiles</taxon>
        <taxon>Oomycota</taxon>
        <taxon>Peronosporales</taxon>
        <taxon>Peronosporaceae</taxon>
        <taxon>Phytophthora</taxon>
    </lineage>
</organism>
<evidence type="ECO:0000255" key="1"/>
<evidence type="ECO:0000256" key="2">
    <source>
        <dbReference type="SAM" id="MobiDB-lite"/>
    </source>
</evidence>
<evidence type="ECO:0000269" key="3">
    <source>
    </source>
</evidence>
<evidence type="ECO:0000269" key="4">
    <source>
    </source>
</evidence>
<evidence type="ECO:0000269" key="5">
    <source>
    </source>
</evidence>
<evidence type="ECO:0000269" key="6">
    <source>
    </source>
</evidence>
<evidence type="ECO:0000303" key="7">
    <source>
    </source>
</evidence>
<evidence type="ECO:0000305" key="8"/>
<evidence type="ECO:0000305" key="9">
    <source>
    </source>
</evidence>
<name>RXLRO_PHYIT</name>
<feature type="signal peptide" evidence="1">
    <location>
        <begin position="1"/>
        <end position="20"/>
    </location>
</feature>
<feature type="chain" id="PRO_5003012918" description="RxLR effector protein PITG_14783">
    <location>
        <begin position="21"/>
        <end position="130"/>
    </location>
</feature>
<feature type="region of interest" description="Disordered" evidence="2">
    <location>
        <begin position="27"/>
        <end position="58"/>
    </location>
</feature>
<feature type="short sequence motif" description="RxLR-dEER" evidence="9">
    <location>
        <begin position="38"/>
        <end position="56"/>
    </location>
</feature>
<reference key="1">
    <citation type="journal article" date="2009" name="Nature">
        <title>Genome sequence and analysis of the Irish potato famine pathogen Phytophthora infestans.</title>
        <authorList>
            <consortium name="The Broad Institute Genome Sequencing Platform"/>
            <person name="Haas B.J."/>
            <person name="Kamoun S."/>
            <person name="Zody M.C."/>
            <person name="Jiang R.H."/>
            <person name="Handsaker R.E."/>
            <person name="Cano L.M."/>
            <person name="Grabherr M."/>
            <person name="Kodira C.D."/>
            <person name="Raffaele S."/>
            <person name="Torto-Alalibo T."/>
            <person name="Bozkurt T.O."/>
            <person name="Ah-Fong A.M."/>
            <person name="Alvarado L."/>
            <person name="Anderson V.L."/>
            <person name="Armstrong M.R."/>
            <person name="Avrova A."/>
            <person name="Baxter L."/>
            <person name="Beynon J."/>
            <person name="Boevink P.C."/>
            <person name="Bollmann S.R."/>
            <person name="Bos J.I."/>
            <person name="Bulone V."/>
            <person name="Cai G."/>
            <person name="Cakir C."/>
            <person name="Carrington J.C."/>
            <person name="Chawner M."/>
            <person name="Conti L."/>
            <person name="Costanzo S."/>
            <person name="Ewan R."/>
            <person name="Fahlgren N."/>
            <person name="Fischbach M.A."/>
            <person name="Fugelstad J."/>
            <person name="Gilroy E.M."/>
            <person name="Gnerre S."/>
            <person name="Green P.J."/>
            <person name="Grenville-Briggs L.J."/>
            <person name="Griffith J."/>
            <person name="Grunwald N.J."/>
            <person name="Horn K."/>
            <person name="Horner N.R."/>
            <person name="Hu C.H."/>
            <person name="Huitema E."/>
            <person name="Jeong D.H."/>
            <person name="Jones A.M."/>
            <person name="Jones J.D."/>
            <person name="Jones R.W."/>
            <person name="Karlsson E.K."/>
            <person name="Kunjeti S.G."/>
            <person name="Lamour K."/>
            <person name="Liu Z."/>
            <person name="Ma L."/>
            <person name="Maclean D."/>
            <person name="Chibucos M.C."/>
            <person name="McDonald H."/>
            <person name="McWalters J."/>
            <person name="Meijer H.J."/>
            <person name="Morgan W."/>
            <person name="Morris P.F."/>
            <person name="Munro C.A."/>
            <person name="O'Neill K."/>
            <person name="Ospina-Giraldo M."/>
            <person name="Pinzon A."/>
            <person name="Pritchard L."/>
            <person name="Ramsahoye B."/>
            <person name="Ren Q."/>
            <person name="Restrepo S."/>
            <person name="Roy S."/>
            <person name="Sadanandom A."/>
            <person name="Savidor A."/>
            <person name="Schornack S."/>
            <person name="Schwartz D.C."/>
            <person name="Schumann U.D."/>
            <person name="Schwessinger B."/>
            <person name="Seyer L."/>
            <person name="Sharpe T."/>
            <person name="Silvar C."/>
            <person name="Song J."/>
            <person name="Studholme D.J."/>
            <person name="Sykes S."/>
            <person name="Thines M."/>
            <person name="van de Vondervoort P.J."/>
            <person name="Phuntumart V."/>
            <person name="Wawra S."/>
            <person name="Weide R."/>
            <person name="Win J."/>
            <person name="Young C."/>
            <person name="Zhou S."/>
            <person name="Fry W."/>
            <person name="Meyers B.C."/>
            <person name="van West P."/>
            <person name="Ristaino J."/>
            <person name="Govers F."/>
            <person name="Birch P.R."/>
            <person name="Whisson S.C."/>
            <person name="Judelson H.S."/>
            <person name="Nusbaum C."/>
        </authorList>
    </citation>
    <scope>NUCLEOTIDE SEQUENCE [LARGE SCALE GENOMIC DNA]</scope>
    <scope>INDUCTION</scope>
    <source>
        <strain>T30-4</strain>
    </source>
</reference>
<reference key="2">
    <citation type="journal article" date="2017" name="BMC Genomics">
        <title>RNA-seq of life stages of the oomycete Phytophthora infestans reveals dynamic changes in metabolic, signal transduction, and pathogenesis genes and a major role for calcium signaling in development.</title>
        <authorList>
            <person name="Ah-Fong A.M."/>
            <person name="Kim K.S."/>
            <person name="Judelson H.S."/>
        </authorList>
    </citation>
    <scope>INDUCTION</scope>
</reference>
<reference key="3">
    <citation type="journal article" date="2017" name="Front. Plant Sci.">
        <title>Conserved RXLR effector genes of Phytophthora infestans expressed at the early stage of potato infection are suppressive to host defense.</title>
        <authorList>
            <person name="Yin J."/>
            <person name="Gu B."/>
            <person name="Huang G."/>
            <person name="Tian Y."/>
            <person name="Quan J."/>
            <person name="Lindqvist-Kreuze H."/>
            <person name="Shan W."/>
        </authorList>
    </citation>
    <scope>INDUCTION</scope>
    <scope>DOMAIN</scope>
</reference>
<reference key="4">
    <citation type="journal article" date="2019" name="J. Exp. Bot.">
        <title>Phytophthora infestans RXLR effectors act in concert at diverse subcellular locations to enhance host colonization.</title>
        <authorList>
            <person name="Wang S."/>
            <person name="McLellan H."/>
            <person name="Bukharova T."/>
            <person name="He Q."/>
            <person name="Murphy F."/>
            <person name="Shi J."/>
            <person name="Sun S."/>
            <person name="van Weymers P."/>
            <person name="Ren Y."/>
            <person name="Thilliez G."/>
            <person name="Wang H."/>
            <person name="Chen X."/>
            <person name="Engelhardt S."/>
            <person name="Vleeshouwers V."/>
            <person name="Gilroy E.M."/>
            <person name="Whisson S.C."/>
            <person name="Hein I."/>
            <person name="Wang X."/>
            <person name="Tian Z."/>
            <person name="Birch P.R.J."/>
            <person name="Boevink P.C."/>
        </authorList>
    </citation>
    <scope>FUNCTION</scope>
    <scope>SUBCELLULAR LOCATION</scope>
</reference>
<proteinExistence type="evidence at transcript level"/>
<protein>
    <recommendedName>
        <fullName evidence="7">RxLR effector protein PITG_14783</fullName>
    </recommendedName>
</protein>
<keyword id="KW-1035">Host cytoplasm</keyword>
<keyword id="KW-1048">Host nucleus</keyword>
<keyword id="KW-1185">Reference proteome</keyword>
<keyword id="KW-0964">Secreted</keyword>
<keyword id="KW-0732">Signal</keyword>
<keyword id="KW-0843">Virulence</keyword>
<comment type="function">
    <text evidence="6">Effector that enhances P.infestans colonization of Nicotiana benthamiana leaves.</text>
</comment>
<comment type="subcellular location">
    <subcellularLocation>
        <location evidence="6">Secreted</location>
    </subcellularLocation>
    <subcellularLocation>
        <location evidence="6">Host nucleus</location>
    </subcellularLocation>
    <subcellularLocation>
        <location evidence="6">Host cytoplasm</location>
    </subcellularLocation>
</comment>
<comment type="induction">
    <text evidence="3 4 5">Expression is induced during host plant infection.</text>
</comment>
<comment type="domain">
    <text evidence="9">The RxLR-dEER motif acts to carry the protein into the host cell cytoplasm through binding to cell surface phosphatidylinositol-3-phosphate.</text>
</comment>
<comment type="similarity">
    <text evidence="8">Belongs to the RxLR effector family.</text>
</comment>
<sequence>MRLPYVFAATMATLLVSSNALVNSNQAMLSSPNEQHQRQLRSHQTPVEDQEPDEERSLSKAEMKRLFEAGNSLDDFAKHLGIADDVVRAQSSNTVLQRLMQTDEYMKYSTYLNFLSKQNKKKKPPTFYHL</sequence>
<accession>D0NP16</accession>
<gene>
    <name type="ORF">PITG_14783</name>
</gene>